<evidence type="ECO:0000255" key="1">
    <source>
        <dbReference type="PROSITE-ProRule" id="PRU00037"/>
    </source>
</evidence>
<evidence type="ECO:0000305" key="2"/>
<feature type="chain" id="PRO_0000186237" description="Putative BTB/POZ domain-containing protein R830">
    <location>
        <begin position="1"/>
        <end position="477"/>
    </location>
</feature>
<feature type="domain" description="BTB" evidence="1">
    <location>
        <begin position="13"/>
        <end position="83"/>
    </location>
</feature>
<sequence length="477" mass="56048">MDFKKVFELGKFSDLELILVDKTNSLSINVHKVILYSAIPYFTTMFDNFKEKDCPSIKMEVIDVVVVSDIIKSFYGIETNNDPDWEYLLKEYISLDYLQLSCTLPDNIKVPDECFETLLDLVEIIGYNSKTIDMLANNLPNDFNLSTLPIELLREIESRYYDFYTMIIDRDNRMYSFNMCRKKLLQVTNKKYDDMYYFSVNDNLVLKASDKKIYTCNLSTKILKEHKENISMTDFHHHHLGETDIFIPENEAFKENIKNRIQKYLNNSSSNDGITEIYYSPDLTQIAVIFMLYQEESGEMYWLFIYDCKSDKLKKIYFKFDRISNVLFVPDGVIFYTHCSQKVIAWSNNKFQDVCCSLKHVKQITYDLGDNLLILTHNKFIVYSLNNKCVVNQVNCVLDKIEFVSKEIIIGYHKFYTNKSCVTNTKIIMYNILTGNETNKINVDLEIYKLVVVPDKARTKQKLKEYIESISTERISS</sequence>
<accession>Q5UQI0</accession>
<proteinExistence type="inferred from homology"/>
<organism>
    <name type="scientific">Acanthamoeba polyphaga mimivirus</name>
    <name type="common">APMV</name>
    <dbReference type="NCBI Taxonomy" id="212035"/>
    <lineage>
        <taxon>Viruses</taxon>
        <taxon>Varidnaviria</taxon>
        <taxon>Bamfordvirae</taxon>
        <taxon>Nucleocytoviricota</taxon>
        <taxon>Megaviricetes</taxon>
        <taxon>Imitervirales</taxon>
        <taxon>Mimiviridae</taxon>
        <taxon>Megamimivirinae</taxon>
        <taxon>Mimivirus</taxon>
        <taxon>Mimivirus bradfordmassiliense</taxon>
    </lineage>
</organism>
<gene>
    <name type="ordered locus">MIMI_R830</name>
</gene>
<comment type="similarity">
    <text evidence="2">Belongs to the mimivirus BTB/WD family.</text>
</comment>
<protein>
    <recommendedName>
        <fullName>Putative BTB/POZ domain-containing protein R830</fullName>
    </recommendedName>
</protein>
<dbReference type="EMBL" id="AY653733">
    <property type="protein sequence ID" value="AAV51089.1"/>
    <property type="molecule type" value="Genomic_DNA"/>
</dbReference>
<dbReference type="SMR" id="Q5UQI0"/>
<dbReference type="KEGG" id="vg:9925494"/>
<dbReference type="OrthoDB" id="7868at10239"/>
<dbReference type="Proteomes" id="UP000001134">
    <property type="component" value="Genome"/>
</dbReference>
<dbReference type="CDD" id="cd18186">
    <property type="entry name" value="BTB_POZ_ZBTB_KLHL-like"/>
    <property type="match status" value="1"/>
</dbReference>
<dbReference type="Gene3D" id="3.30.710.10">
    <property type="entry name" value="Potassium Channel Kv1.1, Chain A"/>
    <property type="match status" value="1"/>
</dbReference>
<dbReference type="InterPro" id="IPR000210">
    <property type="entry name" value="BTB/POZ_dom"/>
</dbReference>
<dbReference type="InterPro" id="IPR011333">
    <property type="entry name" value="SKP1/BTB/POZ_sf"/>
</dbReference>
<dbReference type="Pfam" id="PF00651">
    <property type="entry name" value="BTB"/>
    <property type="match status" value="1"/>
</dbReference>
<dbReference type="SUPFAM" id="SSF82171">
    <property type="entry name" value="DPP6 N-terminal domain-like"/>
    <property type="match status" value="1"/>
</dbReference>
<dbReference type="SUPFAM" id="SSF54695">
    <property type="entry name" value="POZ domain"/>
    <property type="match status" value="1"/>
</dbReference>
<dbReference type="PROSITE" id="PS50097">
    <property type="entry name" value="BTB"/>
    <property type="match status" value="1"/>
</dbReference>
<name>YR830_MIMIV</name>
<keyword id="KW-1185">Reference proteome</keyword>
<organismHost>
    <name type="scientific">Acanthamoeba polyphaga</name>
    <name type="common">Amoeba</name>
    <dbReference type="NCBI Taxonomy" id="5757"/>
</organismHost>
<reference key="1">
    <citation type="journal article" date="2004" name="Science">
        <title>The 1.2-megabase genome sequence of Mimivirus.</title>
        <authorList>
            <person name="Raoult D."/>
            <person name="Audic S."/>
            <person name="Robert C."/>
            <person name="Abergel C."/>
            <person name="Renesto P."/>
            <person name="Ogata H."/>
            <person name="La Scola B."/>
            <person name="Susan M."/>
            <person name="Claverie J.-M."/>
        </authorList>
    </citation>
    <scope>NUCLEOTIDE SEQUENCE [LARGE SCALE GENOMIC DNA]</scope>
    <source>
        <strain>Rowbotham-Bradford</strain>
    </source>
</reference>